<evidence type="ECO:0000250" key="1"/>
<evidence type="ECO:0000255" key="2">
    <source>
        <dbReference type="HAMAP-Rule" id="MF_00403"/>
    </source>
</evidence>
<evidence type="ECO:0000256" key="3">
    <source>
        <dbReference type="SAM" id="MobiDB-lite"/>
    </source>
</evidence>
<evidence type="ECO:0000305" key="4"/>
<accession>Q9CDF9</accession>
<dbReference type="EMBL" id="AE005176">
    <property type="protein sequence ID" value="AAK06360.1"/>
    <property type="molecule type" value="Genomic_DNA"/>
</dbReference>
<dbReference type="PIR" id="F86907">
    <property type="entry name" value="F86907"/>
</dbReference>
<dbReference type="RefSeq" id="NP_268419.1">
    <property type="nucleotide sequence ID" value="NC_002662.1"/>
</dbReference>
<dbReference type="RefSeq" id="WP_003129874.1">
    <property type="nucleotide sequence ID" value="NC_002662.1"/>
</dbReference>
<dbReference type="SMR" id="Q9CDF9"/>
<dbReference type="PaxDb" id="272623-L0389"/>
<dbReference type="EnsemblBacteria" id="AAK06360">
    <property type="protein sequence ID" value="AAK06360"/>
    <property type="gene ID" value="L0389"/>
</dbReference>
<dbReference type="GeneID" id="89634664"/>
<dbReference type="KEGG" id="lla:L0389"/>
<dbReference type="PATRIC" id="fig|272623.7.peg.2427"/>
<dbReference type="eggNOG" id="COG0048">
    <property type="taxonomic scope" value="Bacteria"/>
</dbReference>
<dbReference type="HOGENOM" id="CLU_104295_1_2_9"/>
<dbReference type="OrthoDB" id="9802366at2"/>
<dbReference type="Proteomes" id="UP000002196">
    <property type="component" value="Chromosome"/>
</dbReference>
<dbReference type="GO" id="GO:0015935">
    <property type="term" value="C:small ribosomal subunit"/>
    <property type="evidence" value="ECO:0007669"/>
    <property type="project" value="InterPro"/>
</dbReference>
<dbReference type="GO" id="GO:0019843">
    <property type="term" value="F:rRNA binding"/>
    <property type="evidence" value="ECO:0007669"/>
    <property type="project" value="UniProtKB-UniRule"/>
</dbReference>
<dbReference type="GO" id="GO:0003735">
    <property type="term" value="F:structural constituent of ribosome"/>
    <property type="evidence" value="ECO:0007669"/>
    <property type="project" value="InterPro"/>
</dbReference>
<dbReference type="GO" id="GO:0000049">
    <property type="term" value="F:tRNA binding"/>
    <property type="evidence" value="ECO:0007669"/>
    <property type="project" value="UniProtKB-UniRule"/>
</dbReference>
<dbReference type="GO" id="GO:0006412">
    <property type="term" value="P:translation"/>
    <property type="evidence" value="ECO:0007669"/>
    <property type="project" value="UniProtKB-UniRule"/>
</dbReference>
<dbReference type="CDD" id="cd03368">
    <property type="entry name" value="Ribosomal_S12"/>
    <property type="match status" value="1"/>
</dbReference>
<dbReference type="FunFam" id="2.40.50.140:FF:000001">
    <property type="entry name" value="30S ribosomal protein S12"/>
    <property type="match status" value="1"/>
</dbReference>
<dbReference type="Gene3D" id="2.40.50.140">
    <property type="entry name" value="Nucleic acid-binding proteins"/>
    <property type="match status" value="1"/>
</dbReference>
<dbReference type="HAMAP" id="MF_00403_B">
    <property type="entry name" value="Ribosomal_uS12_B"/>
    <property type="match status" value="1"/>
</dbReference>
<dbReference type="InterPro" id="IPR012340">
    <property type="entry name" value="NA-bd_OB-fold"/>
</dbReference>
<dbReference type="InterPro" id="IPR006032">
    <property type="entry name" value="Ribosomal_uS12"/>
</dbReference>
<dbReference type="InterPro" id="IPR005679">
    <property type="entry name" value="Ribosomal_uS12_bac"/>
</dbReference>
<dbReference type="NCBIfam" id="TIGR00981">
    <property type="entry name" value="rpsL_bact"/>
    <property type="match status" value="1"/>
</dbReference>
<dbReference type="PANTHER" id="PTHR11652">
    <property type="entry name" value="30S RIBOSOMAL PROTEIN S12 FAMILY MEMBER"/>
    <property type="match status" value="1"/>
</dbReference>
<dbReference type="Pfam" id="PF00164">
    <property type="entry name" value="Ribosom_S12_S23"/>
    <property type="match status" value="1"/>
</dbReference>
<dbReference type="PIRSF" id="PIRSF002133">
    <property type="entry name" value="Ribosomal_S12/S23"/>
    <property type="match status" value="1"/>
</dbReference>
<dbReference type="PRINTS" id="PR01034">
    <property type="entry name" value="RIBOSOMALS12"/>
</dbReference>
<dbReference type="SUPFAM" id="SSF50249">
    <property type="entry name" value="Nucleic acid-binding proteins"/>
    <property type="match status" value="1"/>
</dbReference>
<dbReference type="PROSITE" id="PS00055">
    <property type="entry name" value="RIBOSOMAL_S12"/>
    <property type="match status" value="1"/>
</dbReference>
<comment type="function">
    <text evidence="2">With S4 and S5 plays an important role in translational accuracy.</text>
</comment>
<comment type="function">
    <text evidence="2">Interacts with and stabilizes bases of the 16S rRNA that are involved in tRNA selection in the A site and with the mRNA backbone. Located at the interface of the 30S and 50S subunits, it traverses the body of the 30S subunit contacting proteins on the other side and probably holding the rRNA structure together. The combined cluster of proteins S8, S12 and S17 appears to hold together the shoulder and platform of the 30S subunit.</text>
</comment>
<comment type="subunit">
    <text evidence="2">Part of the 30S ribosomal subunit. Contacts proteins S8 and S17. May interact with IF1 in the 30S initiation complex.</text>
</comment>
<comment type="similarity">
    <text evidence="2">Belongs to the universal ribosomal protein uS12 family.</text>
</comment>
<organism>
    <name type="scientific">Lactococcus lactis subsp. lactis (strain IL1403)</name>
    <name type="common">Streptococcus lactis</name>
    <dbReference type="NCBI Taxonomy" id="272623"/>
    <lineage>
        <taxon>Bacteria</taxon>
        <taxon>Bacillati</taxon>
        <taxon>Bacillota</taxon>
        <taxon>Bacilli</taxon>
        <taxon>Lactobacillales</taxon>
        <taxon>Streptococcaceae</taxon>
        <taxon>Lactococcus</taxon>
    </lineage>
</organism>
<protein>
    <recommendedName>
        <fullName evidence="2">Small ribosomal subunit protein uS12</fullName>
    </recommendedName>
    <alternativeName>
        <fullName evidence="4">30S ribosomal protein S12</fullName>
    </alternativeName>
</protein>
<feature type="chain" id="PRO_0000146239" description="Small ribosomal subunit protein uS12">
    <location>
        <begin position="1"/>
        <end position="137"/>
    </location>
</feature>
<feature type="region of interest" description="Disordered" evidence="3">
    <location>
        <begin position="1"/>
        <end position="57"/>
    </location>
</feature>
<feature type="modified residue" description="3-methylthioaspartic acid" evidence="1">
    <location>
        <position position="102"/>
    </location>
</feature>
<gene>
    <name evidence="2" type="primary">rpsL</name>
    <name type="ordered locus">LL2262</name>
    <name type="ORF">L0389</name>
</gene>
<keyword id="KW-0488">Methylation</keyword>
<keyword id="KW-1185">Reference proteome</keyword>
<keyword id="KW-0687">Ribonucleoprotein</keyword>
<keyword id="KW-0689">Ribosomal protein</keyword>
<keyword id="KW-0694">RNA-binding</keyword>
<keyword id="KW-0699">rRNA-binding</keyword>
<keyword id="KW-0820">tRNA-binding</keyword>
<reference key="1">
    <citation type="journal article" date="2001" name="Genome Res.">
        <title>The complete genome sequence of the lactic acid bacterium Lactococcus lactis ssp. lactis IL1403.</title>
        <authorList>
            <person name="Bolotin A."/>
            <person name="Wincker P."/>
            <person name="Mauger S."/>
            <person name="Jaillon O."/>
            <person name="Malarme K."/>
            <person name="Weissenbach J."/>
            <person name="Ehrlich S.D."/>
            <person name="Sorokin A."/>
        </authorList>
    </citation>
    <scope>NUCLEOTIDE SEQUENCE [LARGE SCALE GENOMIC DNA]</scope>
    <source>
        <strain>IL1403</strain>
    </source>
</reference>
<name>RS12_LACLA</name>
<sequence>MPTINQLVRKPRRAQVTKSKSPAMNVGYNSRKKVQTKLASPQKRGVATRVGTMTPKKPNSALRKFARVRLSNLMEVTAYIPGIGHNLQEHSVVLLRGGRVKDLPGVRYHIVRGALDTAGVADRKQSRSKYGAKKPKA</sequence>
<proteinExistence type="inferred from homology"/>